<organism>
    <name type="scientific">Salmonella paratyphi B (strain ATCC BAA-1250 / SPB7)</name>
    <dbReference type="NCBI Taxonomy" id="1016998"/>
    <lineage>
        <taxon>Bacteria</taxon>
        <taxon>Pseudomonadati</taxon>
        <taxon>Pseudomonadota</taxon>
        <taxon>Gammaproteobacteria</taxon>
        <taxon>Enterobacterales</taxon>
        <taxon>Enterobacteriaceae</taxon>
        <taxon>Salmonella</taxon>
    </lineage>
</organism>
<proteinExistence type="inferred from homology"/>
<evidence type="ECO:0000255" key="1">
    <source>
        <dbReference type="HAMAP-Rule" id="MF_01039"/>
    </source>
</evidence>
<reference key="1">
    <citation type="submission" date="2007-11" db="EMBL/GenBank/DDBJ databases">
        <authorList>
            <consortium name="The Salmonella enterica serovar Paratyphi B Genome Sequencing Project"/>
            <person name="McClelland M."/>
            <person name="Sanderson E.K."/>
            <person name="Porwollik S."/>
            <person name="Spieth J."/>
            <person name="Clifton W.S."/>
            <person name="Fulton R."/>
            <person name="Cordes M."/>
            <person name="Wollam A."/>
            <person name="Shah N."/>
            <person name="Pepin K."/>
            <person name="Bhonagiri V."/>
            <person name="Nash W."/>
            <person name="Johnson M."/>
            <person name="Thiruvilangam P."/>
            <person name="Wilson R."/>
        </authorList>
    </citation>
    <scope>NUCLEOTIDE SEQUENCE [LARGE SCALE GENOMIC DNA]</scope>
    <source>
        <strain>ATCC BAA-1250 / SPB7</strain>
    </source>
</reference>
<keyword id="KW-0312">Gluconeogenesis</keyword>
<keyword id="KW-0324">Glycolysis</keyword>
<keyword id="KW-0413">Isomerase</keyword>
<protein>
    <recommendedName>
        <fullName evidence="1">2,3-bisphosphoglycerate-dependent phosphoglycerate mutase</fullName>
        <shortName evidence="1">BPG-dependent PGAM</shortName>
        <shortName evidence="1">PGAM</shortName>
        <shortName evidence="1">Phosphoglyceromutase</shortName>
        <shortName evidence="1">dPGM</shortName>
        <ecNumber evidence="1">5.4.2.11</ecNumber>
    </recommendedName>
</protein>
<dbReference type="EC" id="5.4.2.11" evidence="1"/>
<dbReference type="EMBL" id="CP000886">
    <property type="protein sequence ID" value="ABX68128.1"/>
    <property type="molecule type" value="Genomic_DNA"/>
</dbReference>
<dbReference type="RefSeq" id="WP_000301556.1">
    <property type="nucleotide sequence ID" value="NC_010102.1"/>
</dbReference>
<dbReference type="SMR" id="A9MTL3"/>
<dbReference type="KEGG" id="spq:SPAB_02750"/>
<dbReference type="PATRIC" id="fig|1016998.12.peg.2602"/>
<dbReference type="HOGENOM" id="CLU_033323_1_1_6"/>
<dbReference type="BioCyc" id="SENT1016998:SPAB_RS11180-MONOMER"/>
<dbReference type="UniPathway" id="UPA00109">
    <property type="reaction ID" value="UER00186"/>
</dbReference>
<dbReference type="Proteomes" id="UP000008556">
    <property type="component" value="Chromosome"/>
</dbReference>
<dbReference type="GO" id="GO:0004619">
    <property type="term" value="F:phosphoglycerate mutase activity"/>
    <property type="evidence" value="ECO:0007669"/>
    <property type="project" value="UniProtKB-EC"/>
</dbReference>
<dbReference type="GO" id="GO:0006094">
    <property type="term" value="P:gluconeogenesis"/>
    <property type="evidence" value="ECO:0007669"/>
    <property type="project" value="UniProtKB-UniRule"/>
</dbReference>
<dbReference type="GO" id="GO:0006096">
    <property type="term" value="P:glycolytic process"/>
    <property type="evidence" value="ECO:0007669"/>
    <property type="project" value="UniProtKB-UniRule"/>
</dbReference>
<dbReference type="CDD" id="cd07067">
    <property type="entry name" value="HP_PGM_like"/>
    <property type="match status" value="1"/>
</dbReference>
<dbReference type="FunFam" id="3.40.50.1240:FF:000003">
    <property type="entry name" value="2,3-bisphosphoglycerate-dependent phosphoglycerate mutase"/>
    <property type="match status" value="1"/>
</dbReference>
<dbReference type="Gene3D" id="3.40.50.1240">
    <property type="entry name" value="Phosphoglycerate mutase-like"/>
    <property type="match status" value="1"/>
</dbReference>
<dbReference type="HAMAP" id="MF_01039">
    <property type="entry name" value="PGAM_GpmA"/>
    <property type="match status" value="1"/>
</dbReference>
<dbReference type="InterPro" id="IPR013078">
    <property type="entry name" value="His_Pase_superF_clade-1"/>
</dbReference>
<dbReference type="InterPro" id="IPR029033">
    <property type="entry name" value="His_PPase_superfam"/>
</dbReference>
<dbReference type="InterPro" id="IPR001345">
    <property type="entry name" value="PG/BPGM_mutase_AS"/>
</dbReference>
<dbReference type="InterPro" id="IPR005952">
    <property type="entry name" value="Phosphogly_mut1"/>
</dbReference>
<dbReference type="NCBIfam" id="TIGR01258">
    <property type="entry name" value="pgm_1"/>
    <property type="match status" value="1"/>
</dbReference>
<dbReference type="NCBIfam" id="NF010713">
    <property type="entry name" value="PRK14115.1"/>
    <property type="match status" value="1"/>
</dbReference>
<dbReference type="PANTHER" id="PTHR11931">
    <property type="entry name" value="PHOSPHOGLYCERATE MUTASE"/>
    <property type="match status" value="1"/>
</dbReference>
<dbReference type="Pfam" id="PF00300">
    <property type="entry name" value="His_Phos_1"/>
    <property type="match status" value="1"/>
</dbReference>
<dbReference type="PIRSF" id="PIRSF000709">
    <property type="entry name" value="6PFK_2-Ptase"/>
    <property type="match status" value="1"/>
</dbReference>
<dbReference type="SMART" id="SM00855">
    <property type="entry name" value="PGAM"/>
    <property type="match status" value="1"/>
</dbReference>
<dbReference type="SUPFAM" id="SSF53254">
    <property type="entry name" value="Phosphoglycerate mutase-like"/>
    <property type="match status" value="1"/>
</dbReference>
<dbReference type="PROSITE" id="PS00175">
    <property type="entry name" value="PG_MUTASE"/>
    <property type="match status" value="1"/>
</dbReference>
<accession>A9MTL3</accession>
<comment type="function">
    <text evidence="1">Catalyzes the interconversion of 2-phosphoglycerate and 3-phosphoglycerate.</text>
</comment>
<comment type="catalytic activity">
    <reaction evidence="1">
        <text>(2R)-2-phosphoglycerate = (2R)-3-phosphoglycerate</text>
        <dbReference type="Rhea" id="RHEA:15901"/>
        <dbReference type="ChEBI" id="CHEBI:58272"/>
        <dbReference type="ChEBI" id="CHEBI:58289"/>
        <dbReference type="EC" id="5.4.2.11"/>
    </reaction>
</comment>
<comment type="pathway">
    <text evidence="1">Carbohydrate degradation; glycolysis; pyruvate from D-glyceraldehyde 3-phosphate: step 3/5.</text>
</comment>
<comment type="subunit">
    <text evidence="1">Homodimer.</text>
</comment>
<comment type="similarity">
    <text evidence="1">Belongs to the phosphoglycerate mutase family. BPG-dependent PGAM subfamily.</text>
</comment>
<sequence>MAVTKLVLVRHGESQWNKENRFTGWYDVDLSEKGVSEAKAAGKLLKEEGFSFDFAYTSVLKRAIHTLWNVLDELDQAWLPVEKSWKLNERHYGALQGLNKAETAEKYGDEQVKQWRRGFAVTPPELTKDDERYPGHDPRYAKLSEKELPLTESLALTIDRVIPYWNDTILPRMKSGERVIIAAHGNSLRALVKYLDNMSEDEILELNIPTGVPLVYEFDENFKPLKHYYLGNADEIAAKAAAVANQGKAK</sequence>
<gene>
    <name evidence="1" type="primary">gpmA</name>
    <name type="ordered locus">SPAB_02750</name>
</gene>
<feature type="chain" id="PRO_1000084330" description="2,3-bisphosphoglycerate-dependent phosphoglycerate mutase">
    <location>
        <begin position="1"/>
        <end position="250"/>
    </location>
</feature>
<feature type="active site" description="Tele-phosphohistidine intermediate" evidence="1">
    <location>
        <position position="11"/>
    </location>
</feature>
<feature type="active site" description="Proton donor/acceptor" evidence="1">
    <location>
        <position position="89"/>
    </location>
</feature>
<feature type="binding site" evidence="1">
    <location>
        <begin position="10"/>
        <end position="17"/>
    </location>
    <ligand>
        <name>substrate</name>
    </ligand>
</feature>
<feature type="binding site" evidence="1">
    <location>
        <begin position="23"/>
        <end position="24"/>
    </location>
    <ligand>
        <name>substrate</name>
    </ligand>
</feature>
<feature type="binding site" evidence="1">
    <location>
        <position position="62"/>
    </location>
    <ligand>
        <name>substrate</name>
    </ligand>
</feature>
<feature type="binding site" evidence="1">
    <location>
        <begin position="89"/>
        <end position="92"/>
    </location>
    <ligand>
        <name>substrate</name>
    </ligand>
</feature>
<feature type="binding site" evidence="1">
    <location>
        <position position="100"/>
    </location>
    <ligand>
        <name>substrate</name>
    </ligand>
</feature>
<feature type="binding site" evidence="1">
    <location>
        <begin position="116"/>
        <end position="117"/>
    </location>
    <ligand>
        <name>substrate</name>
    </ligand>
</feature>
<feature type="binding site" evidence="1">
    <location>
        <begin position="185"/>
        <end position="186"/>
    </location>
    <ligand>
        <name>substrate</name>
    </ligand>
</feature>
<feature type="site" description="Transition state stabilizer" evidence="1">
    <location>
        <position position="184"/>
    </location>
</feature>
<name>GPMA_SALPB</name>